<reference key="1">
    <citation type="journal article" date="1993" name="J. Gen. Virol.">
        <title>Mapping and sequence of the gene encoding the African swine fever virion protein of M(r) 11500.</title>
        <authorList>
            <person name="Alcami A."/>
            <person name="Angulo A."/>
            <person name="Vinuela E."/>
        </authorList>
    </citation>
    <scope>NUCLEOTIDE SEQUENCE [GENOMIC DNA]</scope>
</reference>
<reference key="2">
    <citation type="journal article" date="1995" name="Virology">
        <title>Analysis of the complete nucleotide sequence of African swine fever virus.</title>
        <authorList>
            <person name="Yanez R.J."/>
            <person name="Rodriguez J.M."/>
            <person name="Nogal M.L."/>
            <person name="Yuste L."/>
            <person name="Enriquez C."/>
            <person name="Rodriguez J.F."/>
            <person name="Vinuela E."/>
        </authorList>
    </citation>
    <scope>NUCLEOTIDE SEQUENCE [LARGE SCALE GENOMIC DNA]</scope>
    <source>
        <strain>Badajoz 1971 Vero-adapted</strain>
    </source>
</reference>
<reference key="3">
    <citation type="journal article" date="2018" name="J. Virol.">
        <title>A Proteomic Atlas of the African Swine Fever Virus Particle.</title>
        <authorList>
            <person name="Alejo A."/>
            <person name="Matamoros T."/>
            <person name="Guerra M."/>
            <person name="Andres G."/>
        </authorList>
    </citation>
    <scope>SUBCELLULAR LOCATION</scope>
</reference>
<reference key="4">
    <citation type="journal article" date="2022" name="J. Virol.">
        <title>The A137R Protein of African Swine Fever Virus Inhibits Type I Interferon Production via the Autophagy-Mediated Lysosomal Degradation of TBK1.</title>
        <authorList>
            <person name="Sun M."/>
            <person name="Yu S."/>
            <person name="Ge H."/>
            <person name="Wang T."/>
            <person name="Li Y."/>
            <person name="Zhou P."/>
            <person name="Pan L."/>
            <person name="Han Y."/>
            <person name="Yang Y."/>
            <person name="Sun Y."/>
            <person name="Li S."/>
            <person name="Li L.F."/>
            <person name="Qiu H.J."/>
        </authorList>
    </citation>
    <scope>FUNCTION</scope>
    <scope>INTERACTION WITH HOST TBK1</scope>
    <scope>SUBCELLULAR LOCATION</scope>
</reference>
<comment type="function">
    <text evidence="2">Plays a role in the inhibition of the host innate immune response. Mechanistically, promotes the autophagy-mediated lysosomal degradation of host TBK1 and affects IRF3 nuclear translocation to block type I IFN production.</text>
</comment>
<comment type="subunit">
    <text evidence="2">Interacts with host TBK1.</text>
</comment>
<comment type="subcellular location">
    <subcellularLocation>
        <location evidence="1">Virion</location>
    </subcellularLocation>
    <subcellularLocation>
        <location evidence="2">Host cytoplasm</location>
    </subcellularLocation>
</comment>
<comment type="induction">
    <text>Expressed in the late phase of the viral replicative cycle.</text>
</comment>
<comment type="similarity">
    <text evidence="3">Belongs to the asfivirus A137R family.</text>
</comment>
<organismHost>
    <name type="scientific">Ornithodoros</name>
    <name type="common">relapsing fever ticks</name>
    <dbReference type="NCBI Taxonomy" id="6937"/>
</organismHost>
<organismHost>
    <name type="scientific">Sus scrofa</name>
    <name type="common">Pig</name>
    <dbReference type="NCBI Taxonomy" id="9823"/>
</organismHost>
<proteinExistence type="evidence at protein level"/>
<evidence type="ECO:0000269" key="1">
    <source>
    </source>
</evidence>
<evidence type="ECO:0000269" key="2">
    <source>
    </source>
</evidence>
<evidence type="ECO:0000305" key="3"/>
<protein>
    <recommendedName>
        <fullName>Structural protein A137R</fullName>
    </recommendedName>
    <alternativeName>
        <fullName>Structural protein p11.5</fullName>
    </alternativeName>
</protein>
<sequence>MEAVLTKLDQEEKKALQNFHRCAWEETKNIINDFLEIPEERCTYKFNSYTKKMELLFTPEFHTAWHEVPECREFILNFLRLISGHRVVLKGPTFVFTKETKNLGIPSTINVDFQANIENMDDLQKGNLIGKMNIKEG</sequence>
<feature type="chain" id="PRO_0000379079" description="Structural protein A137R">
    <location>
        <begin position="1"/>
        <end position="137"/>
    </location>
</feature>
<dbReference type="EMBL" id="L16901">
    <property type="protein sequence ID" value="AAA16336.1"/>
    <property type="molecule type" value="Unassigned_DNA"/>
</dbReference>
<dbReference type="EMBL" id="U18466">
    <property type="protein sequence ID" value="AAA65272.1"/>
    <property type="molecule type" value="Genomic_DNA"/>
</dbReference>
<dbReference type="PIR" id="JQ2325">
    <property type="entry name" value="JQ2325"/>
</dbReference>
<dbReference type="RefSeq" id="NP_042736.1">
    <property type="nucleotide sequence ID" value="NC_001659.2"/>
</dbReference>
<dbReference type="SMR" id="Q07344"/>
<dbReference type="GeneID" id="22220424"/>
<dbReference type="KEGG" id="vg:22220424"/>
<dbReference type="Proteomes" id="UP000000624">
    <property type="component" value="Segment"/>
</dbReference>
<dbReference type="GO" id="GO:0030430">
    <property type="term" value="C:host cell cytoplasm"/>
    <property type="evidence" value="ECO:0007669"/>
    <property type="project" value="UniProtKB-SubCell"/>
</dbReference>
<dbReference type="GO" id="GO:0044423">
    <property type="term" value="C:virion component"/>
    <property type="evidence" value="ECO:0007669"/>
    <property type="project" value="UniProtKB-KW"/>
</dbReference>
<dbReference type="GO" id="GO:0039723">
    <property type="term" value="P:symbiont-mediated suppression of host cytoplasmic pattern recognition receptor signaling pathway via inhibition of TBK1 activity"/>
    <property type="evidence" value="ECO:0007669"/>
    <property type="project" value="UniProtKB-KW"/>
</dbReference>
<dbReference type="GO" id="GO:0140886">
    <property type="term" value="P:symbiont-mediated suppression of host interferon-mediated signaling pathway"/>
    <property type="evidence" value="ECO:0000269"/>
    <property type="project" value="SigSci"/>
</dbReference>
<dbReference type="GO" id="GO:0039722">
    <property type="term" value="P:symbiont-mediated suppression of host toll-like receptor signaling pathway"/>
    <property type="evidence" value="ECO:0007669"/>
    <property type="project" value="UniProtKB-KW"/>
</dbReference>
<gene>
    <name type="ordered locus">Ba71V-042</name>
    <name type="ORF">A137R</name>
</gene>
<name>VF137_ASFB7</name>
<keyword id="KW-1035">Host cytoplasm</keyword>
<keyword id="KW-0945">Host-virus interaction</keyword>
<keyword id="KW-1090">Inhibition of host innate immune response by virus</keyword>
<keyword id="KW-1223">Inhibition of host TBK1 by virus</keyword>
<keyword id="KW-1225">Inhibition of host TLR pathway by virus</keyword>
<keyword id="KW-0426">Late protein</keyword>
<keyword id="KW-1185">Reference proteome</keyword>
<keyword id="KW-0899">Viral immunoevasion</keyword>
<keyword id="KW-0946">Virion</keyword>
<organism>
    <name type="scientific">African swine fever virus (strain Badajoz 1971 Vero-adapted)</name>
    <name type="common">Ba71V</name>
    <name type="synonym">ASFV</name>
    <dbReference type="NCBI Taxonomy" id="10498"/>
    <lineage>
        <taxon>Viruses</taxon>
        <taxon>Varidnaviria</taxon>
        <taxon>Bamfordvirae</taxon>
        <taxon>Nucleocytoviricota</taxon>
        <taxon>Pokkesviricetes</taxon>
        <taxon>Asfuvirales</taxon>
        <taxon>Asfarviridae</taxon>
        <taxon>Asfivirus</taxon>
        <taxon>African swine fever virus</taxon>
    </lineage>
</organism>
<accession>Q07344</accession>
<accession>Q4JFI4</accession>